<organism>
    <name type="scientific">Prochlorococcus marinus (strain NATL1A)</name>
    <dbReference type="NCBI Taxonomy" id="167555"/>
    <lineage>
        <taxon>Bacteria</taxon>
        <taxon>Bacillati</taxon>
        <taxon>Cyanobacteriota</taxon>
        <taxon>Cyanophyceae</taxon>
        <taxon>Synechococcales</taxon>
        <taxon>Prochlorococcaceae</taxon>
        <taxon>Prochlorococcus</taxon>
    </lineage>
</organism>
<sequence length="518" mass="56646">MSPIALLSVSDKTGLIPLAKALVNELGFKIISSGGTAKLIESENLPVTRVADYTGFPEILGGRVKTLNPKIHGGILARRDKQSHLDDLDKQNINPIDLVVVNLYPFVKTISKENVSWEEAIENIDIGGPTMIRAAAKNHQDVLVVTDPSQYSNLIDAYKSKKITPELRKKYSQQAFEHTATYDLTISNWIANQSSSKKVSWLQSLPLKQELRYGENPHQKASWYGEPEKGWSGANQLQGKELSTNNLLDLEAALSTLREFGYKNTISNPSYQKAAVVIKHTNPCGVAIGDSPSSALKRALDGDRVSAFGGIIAINCPVDEAAAKEIENIFIECVVAPYFDETAKEILSKKKNLRLLELKAESVQKADKNHIRSILGGLLIQDLDEPSIDQKKWKSVTELIPTDEEMNDLSFAWKIVKHIRSNAIAVASNQQSLGIGAGQMNRVGSAKLALEAAGTKSKGAVLASDGFFPFDDTVKMASDYGISSIIQPGGSIRDEDSIKACNELGIKMILTGKRHFLH</sequence>
<protein>
    <recommendedName>
        <fullName evidence="1">Bifunctional purine biosynthesis protein PurH</fullName>
    </recommendedName>
    <domain>
        <recommendedName>
            <fullName evidence="1">Phosphoribosylaminoimidazolecarboxamide formyltransferase</fullName>
            <ecNumber evidence="1">2.1.2.3</ecNumber>
        </recommendedName>
        <alternativeName>
            <fullName evidence="1">AICAR transformylase</fullName>
        </alternativeName>
    </domain>
    <domain>
        <recommendedName>
            <fullName evidence="1">IMP cyclohydrolase</fullName>
            <ecNumber evidence="1">3.5.4.10</ecNumber>
        </recommendedName>
        <alternativeName>
            <fullName evidence="1">ATIC</fullName>
        </alternativeName>
        <alternativeName>
            <fullName evidence="1">IMP synthase</fullName>
        </alternativeName>
        <alternativeName>
            <fullName evidence="1">Inosinicase</fullName>
        </alternativeName>
    </domain>
</protein>
<dbReference type="EC" id="2.1.2.3" evidence="1"/>
<dbReference type="EC" id="3.5.4.10" evidence="1"/>
<dbReference type="EMBL" id="CP000553">
    <property type="protein sequence ID" value="ABM74908.1"/>
    <property type="molecule type" value="Genomic_DNA"/>
</dbReference>
<dbReference type="RefSeq" id="WP_011823112.1">
    <property type="nucleotide sequence ID" value="NC_008819.1"/>
</dbReference>
<dbReference type="SMR" id="A2C098"/>
<dbReference type="KEGG" id="pme:NATL1_03441"/>
<dbReference type="eggNOG" id="COG0138">
    <property type="taxonomic scope" value="Bacteria"/>
</dbReference>
<dbReference type="HOGENOM" id="CLU_016316_5_2_3"/>
<dbReference type="UniPathway" id="UPA00074">
    <property type="reaction ID" value="UER00133"/>
</dbReference>
<dbReference type="UniPathway" id="UPA00074">
    <property type="reaction ID" value="UER00135"/>
</dbReference>
<dbReference type="Proteomes" id="UP000002592">
    <property type="component" value="Chromosome"/>
</dbReference>
<dbReference type="GO" id="GO:0005829">
    <property type="term" value="C:cytosol"/>
    <property type="evidence" value="ECO:0007669"/>
    <property type="project" value="TreeGrafter"/>
</dbReference>
<dbReference type="GO" id="GO:0003937">
    <property type="term" value="F:IMP cyclohydrolase activity"/>
    <property type="evidence" value="ECO:0007669"/>
    <property type="project" value="UniProtKB-UniRule"/>
</dbReference>
<dbReference type="GO" id="GO:0004643">
    <property type="term" value="F:phosphoribosylaminoimidazolecarboxamide formyltransferase activity"/>
    <property type="evidence" value="ECO:0007669"/>
    <property type="project" value="UniProtKB-UniRule"/>
</dbReference>
<dbReference type="GO" id="GO:0006189">
    <property type="term" value="P:'de novo' IMP biosynthetic process"/>
    <property type="evidence" value="ECO:0007669"/>
    <property type="project" value="UniProtKB-UniRule"/>
</dbReference>
<dbReference type="CDD" id="cd01421">
    <property type="entry name" value="IMPCH"/>
    <property type="match status" value="1"/>
</dbReference>
<dbReference type="FunFam" id="3.40.140.20:FF:000001">
    <property type="entry name" value="Bifunctional purine biosynthesis protein PurH"/>
    <property type="match status" value="1"/>
</dbReference>
<dbReference type="FunFam" id="3.40.50.1380:FF:000001">
    <property type="entry name" value="Bifunctional purine biosynthesis protein PurH"/>
    <property type="match status" value="1"/>
</dbReference>
<dbReference type="Gene3D" id="3.40.140.20">
    <property type="match status" value="2"/>
</dbReference>
<dbReference type="Gene3D" id="3.40.50.1380">
    <property type="entry name" value="Methylglyoxal synthase-like domain"/>
    <property type="match status" value="1"/>
</dbReference>
<dbReference type="HAMAP" id="MF_00139">
    <property type="entry name" value="PurH"/>
    <property type="match status" value="1"/>
</dbReference>
<dbReference type="InterPro" id="IPR024051">
    <property type="entry name" value="AICAR_Tfase_dup_dom_sf"/>
</dbReference>
<dbReference type="InterPro" id="IPR016193">
    <property type="entry name" value="Cytidine_deaminase-like"/>
</dbReference>
<dbReference type="InterPro" id="IPR011607">
    <property type="entry name" value="MGS-like_dom"/>
</dbReference>
<dbReference type="InterPro" id="IPR036914">
    <property type="entry name" value="MGS-like_dom_sf"/>
</dbReference>
<dbReference type="InterPro" id="IPR002695">
    <property type="entry name" value="PurH-like"/>
</dbReference>
<dbReference type="NCBIfam" id="NF002049">
    <property type="entry name" value="PRK00881.1"/>
    <property type="match status" value="1"/>
</dbReference>
<dbReference type="NCBIfam" id="TIGR00355">
    <property type="entry name" value="purH"/>
    <property type="match status" value="1"/>
</dbReference>
<dbReference type="PANTHER" id="PTHR11692:SF0">
    <property type="entry name" value="BIFUNCTIONAL PURINE BIOSYNTHESIS PROTEIN ATIC"/>
    <property type="match status" value="1"/>
</dbReference>
<dbReference type="PANTHER" id="PTHR11692">
    <property type="entry name" value="BIFUNCTIONAL PURINE BIOSYNTHESIS PROTEIN PURH"/>
    <property type="match status" value="1"/>
</dbReference>
<dbReference type="Pfam" id="PF01808">
    <property type="entry name" value="AICARFT_IMPCHas"/>
    <property type="match status" value="1"/>
</dbReference>
<dbReference type="Pfam" id="PF02142">
    <property type="entry name" value="MGS"/>
    <property type="match status" value="1"/>
</dbReference>
<dbReference type="PIRSF" id="PIRSF000414">
    <property type="entry name" value="AICARFT_IMPCHas"/>
    <property type="match status" value="1"/>
</dbReference>
<dbReference type="SMART" id="SM00798">
    <property type="entry name" value="AICARFT_IMPCHas"/>
    <property type="match status" value="1"/>
</dbReference>
<dbReference type="SMART" id="SM00851">
    <property type="entry name" value="MGS"/>
    <property type="match status" value="1"/>
</dbReference>
<dbReference type="SUPFAM" id="SSF53927">
    <property type="entry name" value="Cytidine deaminase-like"/>
    <property type="match status" value="1"/>
</dbReference>
<dbReference type="SUPFAM" id="SSF52335">
    <property type="entry name" value="Methylglyoxal synthase-like"/>
    <property type="match status" value="1"/>
</dbReference>
<dbReference type="PROSITE" id="PS51855">
    <property type="entry name" value="MGS"/>
    <property type="match status" value="1"/>
</dbReference>
<evidence type="ECO:0000255" key="1">
    <source>
        <dbReference type="HAMAP-Rule" id="MF_00139"/>
    </source>
</evidence>
<evidence type="ECO:0000255" key="2">
    <source>
        <dbReference type="PROSITE-ProRule" id="PRU01202"/>
    </source>
</evidence>
<accession>A2C098</accession>
<gene>
    <name evidence="1" type="primary">purH</name>
    <name type="ordered locus">NATL1_03441</name>
</gene>
<comment type="catalytic activity">
    <reaction evidence="1">
        <text>(6R)-10-formyltetrahydrofolate + 5-amino-1-(5-phospho-beta-D-ribosyl)imidazole-4-carboxamide = 5-formamido-1-(5-phospho-D-ribosyl)imidazole-4-carboxamide + (6S)-5,6,7,8-tetrahydrofolate</text>
        <dbReference type="Rhea" id="RHEA:22192"/>
        <dbReference type="ChEBI" id="CHEBI:57453"/>
        <dbReference type="ChEBI" id="CHEBI:58467"/>
        <dbReference type="ChEBI" id="CHEBI:58475"/>
        <dbReference type="ChEBI" id="CHEBI:195366"/>
        <dbReference type="EC" id="2.1.2.3"/>
    </reaction>
</comment>
<comment type="catalytic activity">
    <reaction evidence="1">
        <text>IMP + H2O = 5-formamido-1-(5-phospho-D-ribosyl)imidazole-4-carboxamide</text>
        <dbReference type="Rhea" id="RHEA:18445"/>
        <dbReference type="ChEBI" id="CHEBI:15377"/>
        <dbReference type="ChEBI" id="CHEBI:58053"/>
        <dbReference type="ChEBI" id="CHEBI:58467"/>
        <dbReference type="EC" id="3.5.4.10"/>
    </reaction>
</comment>
<comment type="pathway">
    <text evidence="1">Purine metabolism; IMP biosynthesis via de novo pathway; 5-formamido-1-(5-phospho-D-ribosyl)imidazole-4-carboxamide from 5-amino-1-(5-phospho-D-ribosyl)imidazole-4-carboxamide (10-formyl THF route): step 1/1.</text>
</comment>
<comment type="pathway">
    <text evidence="1">Purine metabolism; IMP biosynthesis via de novo pathway; IMP from 5-formamido-1-(5-phospho-D-ribosyl)imidazole-4-carboxamide: step 1/1.</text>
</comment>
<comment type="domain">
    <text evidence="1">The IMP cyclohydrolase activity resides in the N-terminal region.</text>
</comment>
<comment type="similarity">
    <text evidence="1">Belongs to the PurH family.</text>
</comment>
<reference key="1">
    <citation type="journal article" date="2007" name="PLoS Genet.">
        <title>Patterns and implications of gene gain and loss in the evolution of Prochlorococcus.</title>
        <authorList>
            <person name="Kettler G.C."/>
            <person name="Martiny A.C."/>
            <person name="Huang K."/>
            <person name="Zucker J."/>
            <person name="Coleman M.L."/>
            <person name="Rodrigue S."/>
            <person name="Chen F."/>
            <person name="Lapidus A."/>
            <person name="Ferriera S."/>
            <person name="Johnson J."/>
            <person name="Steglich C."/>
            <person name="Church G.M."/>
            <person name="Richardson P."/>
            <person name="Chisholm S.W."/>
        </authorList>
    </citation>
    <scope>NUCLEOTIDE SEQUENCE [LARGE SCALE GENOMIC DNA]</scope>
    <source>
        <strain>NATL1A</strain>
    </source>
</reference>
<proteinExistence type="inferred from homology"/>
<name>PUR9_PROM1</name>
<feature type="chain" id="PRO_1000018926" description="Bifunctional purine biosynthesis protein PurH">
    <location>
        <begin position="1"/>
        <end position="518"/>
    </location>
</feature>
<feature type="domain" description="MGS-like" evidence="2">
    <location>
        <begin position="1"/>
        <end position="146"/>
    </location>
</feature>
<keyword id="KW-0378">Hydrolase</keyword>
<keyword id="KW-0511">Multifunctional enzyme</keyword>
<keyword id="KW-0658">Purine biosynthesis</keyword>
<keyword id="KW-0808">Transferase</keyword>